<protein>
    <recommendedName>
        <fullName>Uncharacterized protein RF_0255</fullName>
    </recommendedName>
</protein>
<proteinExistence type="inferred from homology"/>
<dbReference type="EMBL" id="CP000053">
    <property type="protein sequence ID" value="AAY61106.1"/>
    <property type="molecule type" value="Genomic_DNA"/>
</dbReference>
<dbReference type="SMR" id="Q4UMV2"/>
<dbReference type="STRING" id="315456.RF_0255"/>
<dbReference type="KEGG" id="rfe:RF_0255"/>
<dbReference type="eggNOG" id="COG0760">
    <property type="taxonomic scope" value="Bacteria"/>
</dbReference>
<dbReference type="HOGENOM" id="CLU_942947_0_0_5"/>
<dbReference type="OrthoDB" id="9791746at2"/>
<dbReference type="Proteomes" id="UP000008548">
    <property type="component" value="Chromosome"/>
</dbReference>
<dbReference type="Gene3D" id="1.10.4030.10">
    <property type="entry name" value="Porin chaperone SurA, peptide-binding domain"/>
    <property type="match status" value="1"/>
</dbReference>
<dbReference type="InterPro" id="IPR050280">
    <property type="entry name" value="OMP_Chaperone_SurA"/>
</dbReference>
<dbReference type="InterPro" id="IPR027304">
    <property type="entry name" value="Trigger_fact/SurA_dom_sf"/>
</dbReference>
<dbReference type="PANTHER" id="PTHR47637">
    <property type="entry name" value="CHAPERONE SURA"/>
    <property type="match status" value="1"/>
</dbReference>
<dbReference type="PANTHER" id="PTHR47637:SF1">
    <property type="entry name" value="CHAPERONE SURA"/>
    <property type="match status" value="1"/>
</dbReference>
<dbReference type="Pfam" id="PF13624">
    <property type="entry name" value="SurA_N_3"/>
    <property type="match status" value="1"/>
</dbReference>
<dbReference type="SUPFAM" id="SSF109998">
    <property type="entry name" value="Triger factor/SurA peptide-binding domain-like"/>
    <property type="match status" value="1"/>
</dbReference>
<accession>Q4UMV2</accession>
<gene>
    <name type="ordered locus">RF_0255</name>
</gene>
<reference key="1">
    <citation type="journal article" date="2005" name="PLoS Biol.">
        <title>The genome sequence of Rickettsia felis identifies the first putative conjugative plasmid in an obligate intracellular parasite.</title>
        <authorList>
            <person name="Ogata H."/>
            <person name="Renesto P."/>
            <person name="Audic S."/>
            <person name="Robert C."/>
            <person name="Blanc G."/>
            <person name="Fournier P.-E."/>
            <person name="Parinello H."/>
            <person name="Claverie J.-M."/>
            <person name="Raoult D."/>
        </authorList>
    </citation>
    <scope>NUCLEOTIDE SEQUENCE [LARGE SCALE GENOMIC DNA]</scope>
    <source>
        <strain>ATCC VR-1525 / URRWXCal2</strain>
    </source>
</reference>
<keyword id="KW-0732">Signal</keyword>
<evidence type="ECO:0000255" key="1"/>
<organism>
    <name type="scientific">Rickettsia felis (strain ATCC VR-1525 / URRWXCal2)</name>
    <name type="common">Rickettsia azadi</name>
    <dbReference type="NCBI Taxonomy" id="315456"/>
    <lineage>
        <taxon>Bacteria</taxon>
        <taxon>Pseudomonadati</taxon>
        <taxon>Pseudomonadota</taxon>
        <taxon>Alphaproteobacteria</taxon>
        <taxon>Rickettsiales</taxon>
        <taxon>Rickettsiaceae</taxon>
        <taxon>Rickettsieae</taxon>
        <taxon>Rickettsia</taxon>
        <taxon>spotted fever group</taxon>
    </lineage>
</organism>
<name>Y255_RICFE</name>
<sequence>MKKLLLIIITVFFAFNVAQASLPNIVASVNYEPITLNEFRARKKMIMALNNVESLTPAQDKQLSDLAIKSLIDESLLFQYAGDREIPQEEIDNAIKSIEDHNKMPHGSLLQYLKSRSVNPDSFISQIKSELIKMNILSSLSRSVQVSNKEIDVAILSSDQKDVEISMQVFTSKDGGNKAFTQMNNLKNRLKKCADVKKSLYDNFATMQIITDKLSKIEGVKQTIVKDLSSDKASNVFEVNNKFEIILVCSKKILNVNEDENNYVVNFLTNKKISQKAQKMFENMRKKAVIKIMLPS</sequence>
<feature type="signal peptide" evidence="1">
    <location>
        <begin position="1"/>
        <end position="20"/>
    </location>
</feature>
<feature type="chain" id="PRO_0000277653" description="Uncharacterized protein RF_0255">
    <location>
        <begin position="21"/>
        <end position="296"/>
    </location>
</feature>